<organism>
    <name type="scientific">Arabidopsis thaliana</name>
    <name type="common">Mouse-ear cress</name>
    <dbReference type="NCBI Taxonomy" id="3702"/>
    <lineage>
        <taxon>Eukaryota</taxon>
        <taxon>Viridiplantae</taxon>
        <taxon>Streptophyta</taxon>
        <taxon>Embryophyta</taxon>
        <taxon>Tracheophyta</taxon>
        <taxon>Spermatophyta</taxon>
        <taxon>Magnoliopsida</taxon>
        <taxon>eudicotyledons</taxon>
        <taxon>Gunneridae</taxon>
        <taxon>Pentapetalae</taxon>
        <taxon>rosids</taxon>
        <taxon>malvids</taxon>
        <taxon>Brassicales</taxon>
        <taxon>Brassicaceae</taxon>
        <taxon>Camelineae</taxon>
        <taxon>Arabidopsis</taxon>
    </lineage>
</organism>
<reference key="1">
    <citation type="journal article" date="2000" name="Nature">
        <title>Sequence and analysis of chromosome 1 of the plant Arabidopsis thaliana.</title>
        <authorList>
            <person name="Theologis A."/>
            <person name="Ecker J.R."/>
            <person name="Palm C.J."/>
            <person name="Federspiel N.A."/>
            <person name="Kaul S."/>
            <person name="White O."/>
            <person name="Alonso J."/>
            <person name="Altafi H."/>
            <person name="Araujo R."/>
            <person name="Bowman C.L."/>
            <person name="Brooks S.Y."/>
            <person name="Buehler E."/>
            <person name="Chan A."/>
            <person name="Chao Q."/>
            <person name="Chen H."/>
            <person name="Cheuk R.F."/>
            <person name="Chin C.W."/>
            <person name="Chung M.K."/>
            <person name="Conn L."/>
            <person name="Conway A.B."/>
            <person name="Conway A.R."/>
            <person name="Creasy T.H."/>
            <person name="Dewar K."/>
            <person name="Dunn P."/>
            <person name="Etgu P."/>
            <person name="Feldblyum T.V."/>
            <person name="Feng J.-D."/>
            <person name="Fong B."/>
            <person name="Fujii C.Y."/>
            <person name="Gill J.E."/>
            <person name="Goldsmith A.D."/>
            <person name="Haas B."/>
            <person name="Hansen N.F."/>
            <person name="Hughes B."/>
            <person name="Huizar L."/>
            <person name="Hunter J.L."/>
            <person name="Jenkins J."/>
            <person name="Johnson-Hopson C."/>
            <person name="Khan S."/>
            <person name="Khaykin E."/>
            <person name="Kim C.J."/>
            <person name="Koo H.L."/>
            <person name="Kremenetskaia I."/>
            <person name="Kurtz D.B."/>
            <person name="Kwan A."/>
            <person name="Lam B."/>
            <person name="Langin-Hooper S."/>
            <person name="Lee A."/>
            <person name="Lee J.M."/>
            <person name="Lenz C.A."/>
            <person name="Li J.H."/>
            <person name="Li Y.-P."/>
            <person name="Lin X."/>
            <person name="Liu S.X."/>
            <person name="Liu Z.A."/>
            <person name="Luros J.S."/>
            <person name="Maiti R."/>
            <person name="Marziali A."/>
            <person name="Militscher J."/>
            <person name="Miranda M."/>
            <person name="Nguyen M."/>
            <person name="Nierman W.C."/>
            <person name="Osborne B.I."/>
            <person name="Pai G."/>
            <person name="Peterson J."/>
            <person name="Pham P.K."/>
            <person name="Rizzo M."/>
            <person name="Rooney T."/>
            <person name="Rowley D."/>
            <person name="Sakano H."/>
            <person name="Salzberg S.L."/>
            <person name="Schwartz J.R."/>
            <person name="Shinn P."/>
            <person name="Southwick A.M."/>
            <person name="Sun H."/>
            <person name="Tallon L.J."/>
            <person name="Tambunga G."/>
            <person name="Toriumi M.J."/>
            <person name="Town C.D."/>
            <person name="Utterback T."/>
            <person name="Van Aken S."/>
            <person name="Vaysberg M."/>
            <person name="Vysotskaia V.S."/>
            <person name="Walker M."/>
            <person name="Wu D."/>
            <person name="Yu G."/>
            <person name="Fraser C.M."/>
            <person name="Venter J.C."/>
            <person name="Davis R.W."/>
        </authorList>
    </citation>
    <scope>NUCLEOTIDE SEQUENCE [LARGE SCALE GENOMIC DNA]</scope>
    <source>
        <strain>cv. Columbia</strain>
    </source>
</reference>
<reference key="2">
    <citation type="journal article" date="2017" name="Plant J.">
        <title>Araport11: a complete reannotation of the Arabidopsis thaliana reference genome.</title>
        <authorList>
            <person name="Cheng C.Y."/>
            <person name="Krishnakumar V."/>
            <person name="Chan A.P."/>
            <person name="Thibaud-Nissen F."/>
            <person name="Schobel S."/>
            <person name="Town C.D."/>
        </authorList>
    </citation>
    <scope>GENOME REANNOTATION</scope>
    <source>
        <strain>cv. Columbia</strain>
    </source>
</reference>
<reference key="3">
    <citation type="journal article" date="2002" name="Science">
        <title>Functional annotation of a full-length Arabidopsis cDNA collection.</title>
        <authorList>
            <person name="Seki M."/>
            <person name="Narusaka M."/>
            <person name="Kamiya A."/>
            <person name="Ishida J."/>
            <person name="Satou M."/>
            <person name="Sakurai T."/>
            <person name="Nakajima M."/>
            <person name="Enju A."/>
            <person name="Akiyama K."/>
            <person name="Oono Y."/>
            <person name="Muramatsu M."/>
            <person name="Hayashizaki Y."/>
            <person name="Kawai J."/>
            <person name="Carninci P."/>
            <person name="Itoh M."/>
            <person name="Ishii Y."/>
            <person name="Arakawa T."/>
            <person name="Shibata K."/>
            <person name="Shinagawa A."/>
            <person name="Shinozaki K."/>
        </authorList>
    </citation>
    <scope>NUCLEOTIDE SEQUENCE [LARGE SCALE MRNA] OF 28-387</scope>
    <source>
        <strain>cv. Columbia</strain>
    </source>
</reference>
<reference key="4">
    <citation type="journal article" date="2005" name="J. Mol. Evol.">
        <title>Plant photoreceptors: phylogenetic overview.</title>
        <authorList>
            <person name="Lariguet P."/>
            <person name="Dunand C."/>
        </authorList>
    </citation>
    <scope>GENE FAMILY</scope>
    <scope>NOMENCLATURE</scope>
</reference>
<proteinExistence type="evidence at transcript level"/>
<gene>
    <name type="primary">PKS3</name>
    <name type="ordered locus">At1g18810</name>
    <name type="ORF">F6A14.9</name>
</gene>
<name>PKS3_ARATH</name>
<accession>Q8GXS8</accession>
<accession>Q9M9V1</accession>
<keyword id="KW-0607">Phytochrome signaling pathway</keyword>
<keyword id="KW-1185">Reference proteome</keyword>
<evidence type="ECO:0000250" key="1"/>
<evidence type="ECO:0000256" key="2">
    <source>
        <dbReference type="SAM" id="MobiDB-lite"/>
    </source>
</evidence>
<evidence type="ECO:0000305" key="3"/>
<dbReference type="EMBL" id="AC011809">
    <property type="protein sequence ID" value="AAF27098.1"/>
    <property type="molecule type" value="Genomic_DNA"/>
</dbReference>
<dbReference type="EMBL" id="CP002684">
    <property type="protein sequence ID" value="AEE29766.1"/>
    <property type="molecule type" value="Genomic_DNA"/>
</dbReference>
<dbReference type="EMBL" id="AK118063">
    <property type="protein sequence ID" value="BAC42694.1"/>
    <property type="status" value="ALT_INIT"/>
    <property type="molecule type" value="mRNA"/>
</dbReference>
<dbReference type="PIR" id="A86322">
    <property type="entry name" value="A86322"/>
</dbReference>
<dbReference type="RefSeq" id="NP_564064.1">
    <property type="nucleotide sequence ID" value="NM_101739.3"/>
</dbReference>
<dbReference type="FunCoup" id="Q8GXS8">
    <property type="interactions" value="6"/>
</dbReference>
<dbReference type="STRING" id="3702.Q8GXS8"/>
<dbReference type="iPTMnet" id="Q8GXS8"/>
<dbReference type="PaxDb" id="3702-AT1G18810.1"/>
<dbReference type="ProteomicsDB" id="234670"/>
<dbReference type="EnsemblPlants" id="AT1G18810.1">
    <property type="protein sequence ID" value="AT1G18810.1"/>
    <property type="gene ID" value="AT1G18810"/>
</dbReference>
<dbReference type="GeneID" id="838463"/>
<dbReference type="Gramene" id="AT1G18810.1">
    <property type="protein sequence ID" value="AT1G18810.1"/>
    <property type="gene ID" value="AT1G18810"/>
</dbReference>
<dbReference type="KEGG" id="ath:AT1G18810"/>
<dbReference type="Araport" id="AT1G18810"/>
<dbReference type="TAIR" id="AT1G18810"/>
<dbReference type="eggNOG" id="ENOG502QQHX">
    <property type="taxonomic scope" value="Eukaryota"/>
</dbReference>
<dbReference type="HOGENOM" id="CLU_795356_0_0_1"/>
<dbReference type="InParanoid" id="Q8GXS8"/>
<dbReference type="OMA" id="MSHQKKF"/>
<dbReference type="PhylomeDB" id="Q8GXS8"/>
<dbReference type="PRO" id="PR:Q8GXS8"/>
<dbReference type="Proteomes" id="UP000006548">
    <property type="component" value="Chromosome 1"/>
</dbReference>
<dbReference type="ExpressionAtlas" id="Q8GXS8">
    <property type="expression patterns" value="baseline and differential"/>
</dbReference>
<dbReference type="GO" id="GO:0009506">
    <property type="term" value="C:plasmodesma"/>
    <property type="evidence" value="ECO:0007005"/>
    <property type="project" value="TAIR"/>
</dbReference>
<dbReference type="GO" id="GO:0009638">
    <property type="term" value="P:phototropism"/>
    <property type="evidence" value="ECO:0007669"/>
    <property type="project" value="InterPro"/>
</dbReference>
<dbReference type="GO" id="GO:0009585">
    <property type="term" value="P:red, far-red light phototransduction"/>
    <property type="evidence" value="ECO:0007669"/>
    <property type="project" value="UniProtKB-KW"/>
</dbReference>
<dbReference type="InterPro" id="IPR039615">
    <property type="entry name" value="PKS"/>
</dbReference>
<dbReference type="PANTHER" id="PTHR33781">
    <property type="entry name" value="PROTEIN PHYTOCHROME KINASE SUBSTRATE 1-RELATED"/>
    <property type="match status" value="1"/>
</dbReference>
<dbReference type="PANTHER" id="PTHR33781:SF3">
    <property type="entry name" value="PROTEIN PHYTOCHROME KINASE SUBSTRATE 3"/>
    <property type="match status" value="1"/>
</dbReference>
<protein>
    <recommendedName>
        <fullName>Protein PHYTOCHROME KINASE SUBSTRATE 3</fullName>
    </recommendedName>
</protein>
<comment type="function">
    <text evidence="1">Probably involved in the phytochrome signaling pathway.</text>
</comment>
<comment type="similarity">
    <text evidence="3">Belongs to the PKS family.</text>
</comment>
<comment type="sequence caution" evidence="3">
    <conflict type="erroneous initiation">
        <sequence resource="EMBL-CDS" id="BAC42694"/>
    </conflict>
</comment>
<sequence>MDAEKKSAHFRQISSYKPQLLVLSSIQENPSSKISEKANIKADNDAEIGVFGAEKYFSMKLDHVDSTADITKQHEKENTHDHPNANPNPNPNPHPHPHPQLTKTTSSRSKTSRHGTPSVRSESSCNSQTFLMRINNHNENKQRKMNDTSISFGGFRCYGPCSGVKTVHTDPKNSCKSRNSDRDFVAYDARKHNDKPRLHFEAKKADFHAQEKISLPIQRSDIAMNLERKLSLLTWDAIPNQLSTKNNNHNNNGNNSSMSSNTQEEETASVASSDLFEIENITSSVYEPSEASIGWSVVTGSMADQSVISDFDMMKRVTRNGPVVKTKPVIGEKVRSAGFLSGCKSHKAVSVVDSSRKVKETAKVDHHEMSHQKKFKTEIRIQDLSFL</sequence>
<feature type="chain" id="PRO_0000393342" description="Protein PHYTOCHROME KINASE SUBSTRATE 3">
    <location>
        <begin position="1"/>
        <end position="387"/>
    </location>
</feature>
<feature type="region of interest" description="Disordered" evidence="2">
    <location>
        <begin position="1"/>
        <end position="21"/>
    </location>
</feature>
<feature type="region of interest" description="Disordered" evidence="2">
    <location>
        <begin position="74"/>
        <end position="128"/>
    </location>
</feature>
<feature type="region of interest" description="Disordered" evidence="2">
    <location>
        <begin position="242"/>
        <end position="271"/>
    </location>
</feature>
<feature type="compositionally biased region" description="Polar residues" evidence="2">
    <location>
        <begin position="12"/>
        <end position="21"/>
    </location>
</feature>
<feature type="compositionally biased region" description="Basic and acidic residues" evidence="2">
    <location>
        <begin position="74"/>
        <end position="83"/>
    </location>
</feature>
<feature type="compositionally biased region" description="Polar residues" evidence="2">
    <location>
        <begin position="114"/>
        <end position="128"/>
    </location>
</feature>
<feature type="compositionally biased region" description="Low complexity" evidence="2">
    <location>
        <begin position="242"/>
        <end position="261"/>
    </location>
</feature>